<reference key="1">
    <citation type="journal article" date="2005" name="Nature">
        <title>The genome of the social amoeba Dictyostelium discoideum.</title>
        <authorList>
            <person name="Eichinger L."/>
            <person name="Pachebat J.A."/>
            <person name="Gloeckner G."/>
            <person name="Rajandream M.A."/>
            <person name="Sucgang R."/>
            <person name="Berriman M."/>
            <person name="Song J."/>
            <person name="Olsen R."/>
            <person name="Szafranski K."/>
            <person name="Xu Q."/>
            <person name="Tunggal B."/>
            <person name="Kummerfeld S."/>
            <person name="Madera M."/>
            <person name="Konfortov B.A."/>
            <person name="Rivero F."/>
            <person name="Bankier A.T."/>
            <person name="Lehmann R."/>
            <person name="Hamlin N."/>
            <person name="Davies R."/>
            <person name="Gaudet P."/>
            <person name="Fey P."/>
            <person name="Pilcher K."/>
            <person name="Chen G."/>
            <person name="Saunders D."/>
            <person name="Sodergren E.J."/>
            <person name="Davis P."/>
            <person name="Kerhornou A."/>
            <person name="Nie X."/>
            <person name="Hall N."/>
            <person name="Anjard C."/>
            <person name="Hemphill L."/>
            <person name="Bason N."/>
            <person name="Farbrother P."/>
            <person name="Desany B."/>
            <person name="Just E."/>
            <person name="Morio T."/>
            <person name="Rost R."/>
            <person name="Churcher C.M."/>
            <person name="Cooper J."/>
            <person name="Haydock S."/>
            <person name="van Driessche N."/>
            <person name="Cronin A."/>
            <person name="Goodhead I."/>
            <person name="Muzny D.M."/>
            <person name="Mourier T."/>
            <person name="Pain A."/>
            <person name="Lu M."/>
            <person name="Harper D."/>
            <person name="Lindsay R."/>
            <person name="Hauser H."/>
            <person name="James K.D."/>
            <person name="Quiles M."/>
            <person name="Madan Babu M."/>
            <person name="Saito T."/>
            <person name="Buchrieser C."/>
            <person name="Wardroper A."/>
            <person name="Felder M."/>
            <person name="Thangavelu M."/>
            <person name="Johnson D."/>
            <person name="Knights A."/>
            <person name="Loulseged H."/>
            <person name="Mungall K.L."/>
            <person name="Oliver K."/>
            <person name="Price C."/>
            <person name="Quail M.A."/>
            <person name="Urushihara H."/>
            <person name="Hernandez J."/>
            <person name="Rabbinowitsch E."/>
            <person name="Steffen D."/>
            <person name="Sanders M."/>
            <person name="Ma J."/>
            <person name="Kohara Y."/>
            <person name="Sharp S."/>
            <person name="Simmonds M.N."/>
            <person name="Spiegler S."/>
            <person name="Tivey A."/>
            <person name="Sugano S."/>
            <person name="White B."/>
            <person name="Walker D."/>
            <person name="Woodward J.R."/>
            <person name="Winckler T."/>
            <person name="Tanaka Y."/>
            <person name="Shaulsky G."/>
            <person name="Schleicher M."/>
            <person name="Weinstock G.M."/>
            <person name="Rosenthal A."/>
            <person name="Cox E.C."/>
            <person name="Chisholm R.L."/>
            <person name="Gibbs R.A."/>
            <person name="Loomis W.F."/>
            <person name="Platzer M."/>
            <person name="Kay R.R."/>
            <person name="Williams J.G."/>
            <person name="Dear P.H."/>
            <person name="Noegel A.A."/>
            <person name="Barrell B.G."/>
            <person name="Kuspa A."/>
        </authorList>
    </citation>
    <scope>NUCLEOTIDE SEQUENCE [LARGE SCALE GENOMIC DNA]</scope>
    <source>
        <strain>AX4</strain>
    </source>
</reference>
<dbReference type="EMBL" id="AAFI02000073">
    <property type="protein sequence ID" value="EAL64989.1"/>
    <property type="molecule type" value="Genomic_DNA"/>
</dbReference>
<dbReference type="RefSeq" id="XP_639910.1">
    <property type="nucleotide sequence ID" value="XM_634818.1"/>
</dbReference>
<dbReference type="SMR" id="Q54P07"/>
<dbReference type="STRING" id="44689.Q54P07"/>
<dbReference type="PaxDb" id="44689-DDB0229426"/>
<dbReference type="EnsemblProtists" id="EAL64989">
    <property type="protein sequence ID" value="EAL64989"/>
    <property type="gene ID" value="DDB_G0285051"/>
</dbReference>
<dbReference type="GeneID" id="8624822"/>
<dbReference type="KEGG" id="ddi:DDB_G0285051"/>
<dbReference type="dictyBase" id="DDB_G0285051">
    <property type="gene designation" value="rab32D"/>
</dbReference>
<dbReference type="VEuPathDB" id="AmoebaDB:DDB_G0285051"/>
<dbReference type="eggNOG" id="KOG0394">
    <property type="taxonomic scope" value="Eukaryota"/>
</dbReference>
<dbReference type="HOGENOM" id="CLU_041217_10_6_1"/>
<dbReference type="InParanoid" id="Q54P07"/>
<dbReference type="OMA" id="QNDIITH"/>
<dbReference type="PhylomeDB" id="Q54P07"/>
<dbReference type="Reactome" id="R-DDI-114608">
    <property type="pathway name" value="Platelet degranulation"/>
</dbReference>
<dbReference type="Reactome" id="R-DDI-6798695">
    <property type="pathway name" value="Neutrophil degranulation"/>
</dbReference>
<dbReference type="Reactome" id="R-DDI-8873719">
    <property type="pathway name" value="RAB geranylgeranylation"/>
</dbReference>
<dbReference type="PRO" id="PR:Q54P07"/>
<dbReference type="Proteomes" id="UP000002195">
    <property type="component" value="Chromosome 4"/>
</dbReference>
<dbReference type="GO" id="GO:0005525">
    <property type="term" value="F:GTP binding"/>
    <property type="evidence" value="ECO:0000318"/>
    <property type="project" value="GO_Central"/>
</dbReference>
<dbReference type="GO" id="GO:0003924">
    <property type="term" value="F:GTPase activity"/>
    <property type="evidence" value="ECO:0000318"/>
    <property type="project" value="GO_Central"/>
</dbReference>
<dbReference type="GO" id="GO:0016192">
    <property type="term" value="P:vesicle-mediated transport"/>
    <property type="evidence" value="ECO:0000318"/>
    <property type="project" value="GO_Central"/>
</dbReference>
<dbReference type="CDD" id="cd00154">
    <property type="entry name" value="Rab"/>
    <property type="match status" value="1"/>
</dbReference>
<dbReference type="FunFam" id="3.40.50.300:FF:002280">
    <property type="entry name" value="Small GTP-binding protein, putative"/>
    <property type="match status" value="1"/>
</dbReference>
<dbReference type="Gene3D" id="3.40.50.300">
    <property type="entry name" value="P-loop containing nucleotide triphosphate hydrolases"/>
    <property type="match status" value="1"/>
</dbReference>
<dbReference type="InterPro" id="IPR027417">
    <property type="entry name" value="P-loop_NTPase"/>
</dbReference>
<dbReference type="InterPro" id="IPR005225">
    <property type="entry name" value="Small_GTP-bd"/>
</dbReference>
<dbReference type="InterPro" id="IPR001806">
    <property type="entry name" value="Small_GTPase"/>
</dbReference>
<dbReference type="NCBIfam" id="TIGR00231">
    <property type="entry name" value="small_GTP"/>
    <property type="match status" value="1"/>
</dbReference>
<dbReference type="PANTHER" id="PTHR47981">
    <property type="entry name" value="RAB FAMILY"/>
    <property type="match status" value="1"/>
</dbReference>
<dbReference type="PANTHER" id="PTHR47981:SF20">
    <property type="entry name" value="RAS-RELATED PROTEIN RAB-7A"/>
    <property type="match status" value="1"/>
</dbReference>
<dbReference type="Pfam" id="PF00071">
    <property type="entry name" value="Ras"/>
    <property type="match status" value="1"/>
</dbReference>
<dbReference type="PRINTS" id="PR00449">
    <property type="entry name" value="RASTRNSFRMNG"/>
</dbReference>
<dbReference type="SMART" id="SM00175">
    <property type="entry name" value="RAB"/>
    <property type="match status" value="1"/>
</dbReference>
<dbReference type="SMART" id="SM00176">
    <property type="entry name" value="RAN"/>
    <property type="match status" value="1"/>
</dbReference>
<dbReference type="SMART" id="SM00173">
    <property type="entry name" value="RAS"/>
    <property type="match status" value="1"/>
</dbReference>
<dbReference type="SMART" id="SM00174">
    <property type="entry name" value="RHO"/>
    <property type="match status" value="1"/>
</dbReference>
<dbReference type="SUPFAM" id="SSF52540">
    <property type="entry name" value="P-loop containing nucleoside triphosphate hydrolases"/>
    <property type="match status" value="1"/>
</dbReference>
<dbReference type="PROSITE" id="PS51419">
    <property type="entry name" value="RAB"/>
    <property type="match status" value="1"/>
</dbReference>
<feature type="chain" id="PRO_0000330644" description="Ras-related protein Rab-32D">
    <location>
        <begin position="1"/>
        <end position="228"/>
    </location>
</feature>
<feature type="region of interest" description="Disordered" evidence="2">
    <location>
        <begin position="183"/>
        <end position="228"/>
    </location>
</feature>
<feature type="short sequence motif" description="Effector region" evidence="1">
    <location>
        <begin position="38"/>
        <end position="46"/>
    </location>
</feature>
<feature type="compositionally biased region" description="Acidic residues" evidence="2">
    <location>
        <begin position="185"/>
        <end position="196"/>
    </location>
</feature>
<feature type="compositionally biased region" description="Low complexity" evidence="2">
    <location>
        <begin position="211"/>
        <end position="228"/>
    </location>
</feature>
<feature type="binding site" evidence="1">
    <location>
        <begin position="16"/>
        <end position="23"/>
    </location>
    <ligand>
        <name>GTP</name>
        <dbReference type="ChEBI" id="CHEBI:37565"/>
    </ligand>
</feature>
<feature type="binding site" evidence="1">
    <location>
        <begin position="64"/>
        <end position="68"/>
    </location>
    <ligand>
        <name>GTP</name>
        <dbReference type="ChEBI" id="CHEBI:37565"/>
    </ligand>
</feature>
<feature type="binding site" evidence="1">
    <location>
        <begin position="128"/>
        <end position="131"/>
    </location>
    <ligand>
        <name>GTP</name>
        <dbReference type="ChEBI" id="CHEBI:37565"/>
    </ligand>
</feature>
<feature type="lipid moiety-binding region" description="S-geranylgeranyl cysteine" evidence="1">
    <location>
        <position position="224"/>
    </location>
</feature>
<evidence type="ECO:0000250" key="1"/>
<evidence type="ECO:0000256" key="2">
    <source>
        <dbReference type="SAM" id="MobiDB-lite"/>
    </source>
</evidence>
<evidence type="ECO:0000305" key="3"/>
<name>RB32D_DICDI</name>
<accession>Q54P07</accession>
<protein>
    <recommendedName>
        <fullName>Ras-related protein Rab-32D</fullName>
    </recommendedName>
</protein>
<proteinExistence type="inferred from homology"/>
<organism>
    <name type="scientific">Dictyostelium discoideum</name>
    <name type="common">Social amoeba</name>
    <dbReference type="NCBI Taxonomy" id="44689"/>
    <lineage>
        <taxon>Eukaryota</taxon>
        <taxon>Amoebozoa</taxon>
        <taxon>Evosea</taxon>
        <taxon>Eumycetozoa</taxon>
        <taxon>Dictyostelia</taxon>
        <taxon>Dictyosteliales</taxon>
        <taxon>Dictyosteliaceae</taxon>
        <taxon>Dictyostelium</taxon>
    </lineage>
</organism>
<gene>
    <name type="primary">rab32D</name>
    <name type="ORF">DDB_G0285051</name>
</gene>
<sequence length="228" mass="26056">MINMTETKQLKLILIGDVNVGKTSILHRLIFSKFTEEYKSTIGADFLSKTFYQNDIITHIQLWDTAGQEKYWCLTSAFWRTSDAVILVFDISNESSFRNLNFWYKQFKSKSINPDGTEKQLPILLLANKSDSLTRAVDQSEINQWCTDHKVNLYYEVSAKSSINIKESILKLVEVIIEQDKDSDNEQFNDSPDEETSSITLLGTSKKHDNTNPNKPSTSSPSSCFNCK</sequence>
<keyword id="KW-0342">GTP-binding</keyword>
<keyword id="KW-0449">Lipoprotein</keyword>
<keyword id="KW-0547">Nucleotide-binding</keyword>
<keyword id="KW-0636">Prenylation</keyword>
<keyword id="KW-1185">Reference proteome</keyword>
<comment type="similarity">
    <text evidence="3">Belongs to the small GTPase superfamily. Rab family.</text>
</comment>